<sequence length="291" mass="33789">MNRIQQTFQTSSAPFWYAQLELGFCYENSRTIMSHRKHYGPVRVQKMLWPEKTGVCHAIIVHPPAGIAGGDHLTFQIETEGQAHAVITTPGAGKWYRTNGKQAFQHIYLNVKDDSILEWMPQETMLFDGALAHSETDIHLEQTASFIGWDMLVLGRQARAENFVQGSYHNQFKLWRKNKLLVADTLYFEGGDRWLSSCLGMNNQAVMASFWAVPPEKFRSSFYLEQHIELIRELIMRMDVPVTLTLLEDVLCARFLGNDVRRCHDAFAAIRAKLRRYWFDLDEEFPRIWKT</sequence>
<comment type="function">
    <text evidence="1">Required for maturation of urease via the functional incorporation of the urease nickel metallocenter.</text>
</comment>
<comment type="subunit">
    <text evidence="1">UreD, UreF and UreG form a complex that acts as a GTP-hydrolysis-dependent molecular chaperone, activating the urease apoprotein by helping to assemble the nickel containing metallocenter of UreC. The UreE protein probably delivers the nickel.</text>
</comment>
<comment type="subcellular location">
    <subcellularLocation>
        <location evidence="1">Cytoplasm</location>
    </subcellularLocation>
</comment>
<comment type="similarity">
    <text evidence="1">Belongs to the UreD family.</text>
</comment>
<dbReference type="EMBL" id="CU459141">
    <property type="protein sequence ID" value="CAM87610.1"/>
    <property type="molecule type" value="Genomic_DNA"/>
</dbReference>
<dbReference type="RefSeq" id="WP_001079965.1">
    <property type="nucleotide sequence ID" value="NZ_JBDGFB010000015.1"/>
</dbReference>
<dbReference type="SMR" id="B0V9P8"/>
<dbReference type="EnsemblBacteria" id="CAM87610">
    <property type="protein sequence ID" value="CAM87610"/>
    <property type="gene ID" value="ABAYE2779"/>
</dbReference>
<dbReference type="KEGG" id="aby:ABAYE2779"/>
<dbReference type="HOGENOM" id="CLU_056339_0_0_6"/>
<dbReference type="GO" id="GO:0005737">
    <property type="term" value="C:cytoplasm"/>
    <property type="evidence" value="ECO:0007669"/>
    <property type="project" value="UniProtKB-SubCell"/>
</dbReference>
<dbReference type="GO" id="GO:0016151">
    <property type="term" value="F:nickel cation binding"/>
    <property type="evidence" value="ECO:0007669"/>
    <property type="project" value="UniProtKB-UniRule"/>
</dbReference>
<dbReference type="HAMAP" id="MF_01384">
    <property type="entry name" value="UreD"/>
    <property type="match status" value="1"/>
</dbReference>
<dbReference type="InterPro" id="IPR002669">
    <property type="entry name" value="UreD"/>
</dbReference>
<dbReference type="PANTHER" id="PTHR33643">
    <property type="entry name" value="UREASE ACCESSORY PROTEIN D"/>
    <property type="match status" value="1"/>
</dbReference>
<dbReference type="PANTHER" id="PTHR33643:SF1">
    <property type="entry name" value="UREASE ACCESSORY PROTEIN D"/>
    <property type="match status" value="1"/>
</dbReference>
<dbReference type="Pfam" id="PF01774">
    <property type="entry name" value="UreD"/>
    <property type="match status" value="1"/>
</dbReference>
<feature type="chain" id="PRO_1000145086" description="Urease accessory protein UreD">
    <location>
        <begin position="1"/>
        <end position="291"/>
    </location>
</feature>
<accession>B0V9P8</accession>
<protein>
    <recommendedName>
        <fullName evidence="1">Urease accessory protein UreD</fullName>
    </recommendedName>
</protein>
<gene>
    <name evidence="1" type="primary">ureD</name>
    <name type="ordered locus">ABAYE2779</name>
</gene>
<reference key="1">
    <citation type="journal article" date="2008" name="PLoS ONE">
        <title>Comparative analysis of Acinetobacters: three genomes for three lifestyles.</title>
        <authorList>
            <person name="Vallenet D."/>
            <person name="Nordmann P."/>
            <person name="Barbe V."/>
            <person name="Poirel L."/>
            <person name="Mangenot S."/>
            <person name="Bataille E."/>
            <person name="Dossat C."/>
            <person name="Gas S."/>
            <person name="Kreimeyer A."/>
            <person name="Lenoble P."/>
            <person name="Oztas S."/>
            <person name="Poulain J."/>
            <person name="Segurens B."/>
            <person name="Robert C."/>
            <person name="Abergel C."/>
            <person name="Claverie J.-M."/>
            <person name="Raoult D."/>
            <person name="Medigue C."/>
            <person name="Weissenbach J."/>
            <person name="Cruveiller S."/>
        </authorList>
    </citation>
    <scope>NUCLEOTIDE SEQUENCE [LARGE SCALE GENOMIC DNA]</scope>
    <source>
        <strain>AYE</strain>
    </source>
</reference>
<evidence type="ECO:0000255" key="1">
    <source>
        <dbReference type="HAMAP-Rule" id="MF_01384"/>
    </source>
</evidence>
<keyword id="KW-0143">Chaperone</keyword>
<keyword id="KW-0963">Cytoplasm</keyword>
<keyword id="KW-0996">Nickel insertion</keyword>
<proteinExistence type="inferred from homology"/>
<organism>
    <name type="scientific">Acinetobacter baumannii (strain AYE)</name>
    <dbReference type="NCBI Taxonomy" id="509173"/>
    <lineage>
        <taxon>Bacteria</taxon>
        <taxon>Pseudomonadati</taxon>
        <taxon>Pseudomonadota</taxon>
        <taxon>Gammaproteobacteria</taxon>
        <taxon>Moraxellales</taxon>
        <taxon>Moraxellaceae</taxon>
        <taxon>Acinetobacter</taxon>
        <taxon>Acinetobacter calcoaceticus/baumannii complex</taxon>
    </lineage>
</organism>
<name>URED_ACIBY</name>